<comment type="function">
    <text evidence="1">Mannosyltransferase involved in glycosylphosphatidylinositol-anchor biosynthesis. Transfers the second mannose to the glycosylphosphatidylinositol during GPI precursor assembly (By similarity).</text>
</comment>
<comment type="pathway">
    <text>Glycolipid biosynthesis; glycosylphosphatidylinositol-anchor biosynthesis.</text>
</comment>
<comment type="subcellular location">
    <subcellularLocation>
        <location evidence="1">Endoplasmic reticulum membrane</location>
        <topology evidence="1">Multi-pass membrane protein</topology>
    </subcellularLocation>
</comment>
<comment type="similarity">
    <text evidence="3">Belongs to the PIGV family.</text>
</comment>
<evidence type="ECO:0000250" key="1"/>
<evidence type="ECO:0000255" key="2"/>
<evidence type="ECO:0000305" key="3"/>
<protein>
    <recommendedName>
        <fullName>GPI mannosyltransferase 2</fullName>
        <ecNumber>2.4.1.-</ecNumber>
    </recommendedName>
    <alternativeName>
        <fullName>GPI mannosyltransferase II</fullName>
        <shortName>GPI-MT-II</shortName>
    </alternativeName>
    <alternativeName>
        <fullName>Glycosylphosphatidylinositol-anchor biosynthesis protein 18</fullName>
    </alternativeName>
</protein>
<keyword id="KW-0256">Endoplasmic reticulum</keyword>
<keyword id="KW-0328">Glycosyltransferase</keyword>
<keyword id="KW-0337">GPI-anchor biosynthesis</keyword>
<keyword id="KW-0472">Membrane</keyword>
<keyword id="KW-1185">Reference proteome</keyword>
<keyword id="KW-0808">Transferase</keyword>
<keyword id="KW-0812">Transmembrane</keyword>
<keyword id="KW-1133">Transmembrane helix</keyword>
<accession>Q6FWN4</accession>
<organism>
    <name type="scientific">Candida glabrata (strain ATCC 2001 / BCRC 20586 / JCM 3761 / NBRC 0622 / NRRL Y-65 / CBS 138)</name>
    <name type="common">Yeast</name>
    <name type="synonym">Nakaseomyces glabratus</name>
    <dbReference type="NCBI Taxonomy" id="284593"/>
    <lineage>
        <taxon>Eukaryota</taxon>
        <taxon>Fungi</taxon>
        <taxon>Dikarya</taxon>
        <taxon>Ascomycota</taxon>
        <taxon>Saccharomycotina</taxon>
        <taxon>Saccharomycetes</taxon>
        <taxon>Saccharomycetales</taxon>
        <taxon>Saccharomycetaceae</taxon>
        <taxon>Nakaseomyces</taxon>
    </lineage>
</organism>
<dbReference type="EC" id="2.4.1.-"/>
<dbReference type="EMBL" id="CR380949">
    <property type="protein sequence ID" value="CAG58266.1"/>
    <property type="molecule type" value="Genomic_DNA"/>
</dbReference>
<dbReference type="RefSeq" id="XP_445360.1">
    <property type="nucleotide sequence ID" value="XM_445360.1"/>
</dbReference>
<dbReference type="FunCoup" id="Q6FWN4">
    <property type="interactions" value="321"/>
</dbReference>
<dbReference type="STRING" id="284593.Q6FWN4"/>
<dbReference type="CAZy" id="GT76">
    <property type="family name" value="Glycosyltransferase Family 76"/>
</dbReference>
<dbReference type="EnsemblFungi" id="CAGL0C04235g-T">
    <property type="protein sequence ID" value="CAGL0C04235g-T-p1"/>
    <property type="gene ID" value="CAGL0C04235g"/>
</dbReference>
<dbReference type="KEGG" id="cgr:2886825"/>
<dbReference type="CGD" id="CAL0127622">
    <property type="gene designation" value="CAGL0C04235g"/>
</dbReference>
<dbReference type="VEuPathDB" id="FungiDB:B1J91_C04235g"/>
<dbReference type="VEuPathDB" id="FungiDB:CAGL0C04235g"/>
<dbReference type="eggNOG" id="KOG2647">
    <property type="taxonomic scope" value="Eukaryota"/>
</dbReference>
<dbReference type="HOGENOM" id="CLU_029048_0_0_1"/>
<dbReference type="InParanoid" id="Q6FWN4"/>
<dbReference type="OMA" id="CEWTLPS"/>
<dbReference type="UniPathway" id="UPA00196"/>
<dbReference type="Proteomes" id="UP000002428">
    <property type="component" value="Chromosome C"/>
</dbReference>
<dbReference type="GO" id="GO:0005789">
    <property type="term" value="C:endoplasmic reticulum membrane"/>
    <property type="evidence" value="ECO:0007669"/>
    <property type="project" value="UniProtKB-SubCell"/>
</dbReference>
<dbReference type="GO" id="GO:0120097">
    <property type="term" value="C:glycosylphosphatidylinositol-mannosyltransferase II complex"/>
    <property type="evidence" value="ECO:0007669"/>
    <property type="project" value="EnsemblFungi"/>
</dbReference>
<dbReference type="GO" id="GO:0000009">
    <property type="term" value="F:alpha-1,6-mannosyltransferase activity"/>
    <property type="evidence" value="ECO:0007669"/>
    <property type="project" value="EnsemblFungi"/>
</dbReference>
<dbReference type="GO" id="GO:0004376">
    <property type="term" value="F:glycolipid mannosyltransferase activity"/>
    <property type="evidence" value="ECO:0007669"/>
    <property type="project" value="InterPro"/>
</dbReference>
<dbReference type="GO" id="GO:0006506">
    <property type="term" value="P:GPI anchor biosynthetic process"/>
    <property type="evidence" value="ECO:0007669"/>
    <property type="project" value="UniProtKB-UniPathway"/>
</dbReference>
<dbReference type="InterPro" id="IPR007315">
    <property type="entry name" value="PIG-V/Gpi18"/>
</dbReference>
<dbReference type="PANTHER" id="PTHR12468">
    <property type="entry name" value="GPI MANNOSYLTRANSFERASE 2"/>
    <property type="match status" value="1"/>
</dbReference>
<dbReference type="PANTHER" id="PTHR12468:SF2">
    <property type="entry name" value="GPI MANNOSYLTRANSFERASE 2"/>
    <property type="match status" value="1"/>
</dbReference>
<dbReference type="Pfam" id="PF04188">
    <property type="entry name" value="Mannosyl_trans2"/>
    <property type="match status" value="1"/>
</dbReference>
<reference key="1">
    <citation type="journal article" date="2004" name="Nature">
        <title>Genome evolution in yeasts.</title>
        <authorList>
            <person name="Dujon B."/>
            <person name="Sherman D."/>
            <person name="Fischer G."/>
            <person name="Durrens P."/>
            <person name="Casaregola S."/>
            <person name="Lafontaine I."/>
            <person name="de Montigny J."/>
            <person name="Marck C."/>
            <person name="Neuveglise C."/>
            <person name="Talla E."/>
            <person name="Goffard N."/>
            <person name="Frangeul L."/>
            <person name="Aigle M."/>
            <person name="Anthouard V."/>
            <person name="Babour A."/>
            <person name="Barbe V."/>
            <person name="Barnay S."/>
            <person name="Blanchin S."/>
            <person name="Beckerich J.-M."/>
            <person name="Beyne E."/>
            <person name="Bleykasten C."/>
            <person name="Boisrame A."/>
            <person name="Boyer J."/>
            <person name="Cattolico L."/>
            <person name="Confanioleri F."/>
            <person name="de Daruvar A."/>
            <person name="Despons L."/>
            <person name="Fabre E."/>
            <person name="Fairhead C."/>
            <person name="Ferry-Dumazet H."/>
            <person name="Groppi A."/>
            <person name="Hantraye F."/>
            <person name="Hennequin C."/>
            <person name="Jauniaux N."/>
            <person name="Joyet P."/>
            <person name="Kachouri R."/>
            <person name="Kerrest A."/>
            <person name="Koszul R."/>
            <person name="Lemaire M."/>
            <person name="Lesur I."/>
            <person name="Ma L."/>
            <person name="Muller H."/>
            <person name="Nicaud J.-M."/>
            <person name="Nikolski M."/>
            <person name="Oztas S."/>
            <person name="Ozier-Kalogeropoulos O."/>
            <person name="Pellenz S."/>
            <person name="Potier S."/>
            <person name="Richard G.-F."/>
            <person name="Straub M.-L."/>
            <person name="Suleau A."/>
            <person name="Swennen D."/>
            <person name="Tekaia F."/>
            <person name="Wesolowski-Louvel M."/>
            <person name="Westhof E."/>
            <person name="Wirth B."/>
            <person name="Zeniou-Meyer M."/>
            <person name="Zivanovic Y."/>
            <person name="Bolotin-Fukuhara M."/>
            <person name="Thierry A."/>
            <person name="Bouchier C."/>
            <person name="Caudron B."/>
            <person name="Scarpelli C."/>
            <person name="Gaillardin C."/>
            <person name="Weissenbach J."/>
            <person name="Wincker P."/>
            <person name="Souciet J.-L."/>
        </authorList>
    </citation>
    <scope>NUCLEOTIDE SEQUENCE [LARGE SCALE GENOMIC DNA]</scope>
    <source>
        <strain>ATCC 2001 / BCRC 20586 / JCM 3761 / NBRC 0622 / NRRL Y-65 / CBS 138</strain>
    </source>
</reference>
<name>GPI18_CANGA</name>
<proteinExistence type="inferred from homology"/>
<sequence length="433" mass="51042">MHSLVKPVLFFVVVRIVQYAIISLSPNKQFDLSTNLLLAKYCSEQETQQFWHRHLFNKLLSWDSVFFIKTAMTMDGYPEYEHEWAFSVIWSSLIRSVSPSNNFYTVLKTAVILENLIYFMAMITLFYLTRITFGKLDKSKTHLSDKLATFTAILFSCNSGSGFFTGPYSEPLSFLFSFLGILAREFSVTPIIPYGLEFKSSKIFYYTIVSSFCFTIATLNRSNCILLGFYYVFDSIYLIRRQKYKKALLFPVLAGCIVALFFVRQQFYIPYKNFCELRGEWCNESLINFKPLHFLTRKSLYSYIQSEHWNLGLFNYWTPNNIPNFLFGLPTFVILFSSTFYFSRVYPNYKLKPLIFITRAFTIIILLFAHVQIINRISTFIPLHLWYISDRFVKFEANKKMTGDDWIVKGYIYWLIFWVPIQTSLFVFFLPPA</sequence>
<feature type="chain" id="PRO_0000246243" description="GPI mannosyltransferase 2">
    <location>
        <begin position="1"/>
        <end position="433"/>
    </location>
</feature>
<feature type="transmembrane region" description="Helical" evidence="2">
    <location>
        <begin position="4"/>
        <end position="24"/>
    </location>
</feature>
<feature type="transmembrane region" description="Helical" evidence="2">
    <location>
        <begin position="109"/>
        <end position="129"/>
    </location>
</feature>
<feature type="transmembrane region" description="Helical" evidence="2">
    <location>
        <begin position="148"/>
        <end position="165"/>
    </location>
</feature>
<feature type="transmembrane region" description="Helical" evidence="2">
    <location>
        <begin position="172"/>
        <end position="194"/>
    </location>
</feature>
<feature type="transmembrane region" description="Helical" evidence="2">
    <location>
        <begin position="204"/>
        <end position="226"/>
    </location>
</feature>
<feature type="transmembrane region" description="Helical" evidence="2">
    <location>
        <begin position="247"/>
        <end position="267"/>
    </location>
</feature>
<feature type="transmembrane region" description="Helical" evidence="2">
    <location>
        <begin position="322"/>
        <end position="342"/>
    </location>
</feature>
<feature type="transmembrane region" description="Helical" evidence="2">
    <location>
        <begin position="354"/>
        <end position="374"/>
    </location>
</feature>
<feature type="transmembrane region" description="Helical" evidence="2">
    <location>
        <begin position="410"/>
        <end position="430"/>
    </location>
</feature>
<gene>
    <name type="primary">GPI18</name>
    <name type="ordered locus">CAGL0C04235g</name>
</gene>